<dbReference type="EMBL" id="CP000348">
    <property type="protein sequence ID" value="ABJ78463.1"/>
    <property type="molecule type" value="Genomic_DNA"/>
</dbReference>
<dbReference type="RefSeq" id="WP_002727297.1">
    <property type="nucleotide sequence ID" value="NC_008508.1"/>
</dbReference>
<dbReference type="SMR" id="Q053N2"/>
<dbReference type="GeneID" id="61173532"/>
<dbReference type="KEGG" id="lbl:LBL_0922"/>
<dbReference type="HOGENOM" id="CLU_073981_2_0_12"/>
<dbReference type="GO" id="GO:0005737">
    <property type="term" value="C:cytoplasm"/>
    <property type="evidence" value="ECO:0007669"/>
    <property type="project" value="UniProtKB-SubCell"/>
</dbReference>
<dbReference type="GO" id="GO:0043023">
    <property type="term" value="F:ribosomal large subunit binding"/>
    <property type="evidence" value="ECO:0007669"/>
    <property type="project" value="TreeGrafter"/>
</dbReference>
<dbReference type="GO" id="GO:0006415">
    <property type="term" value="P:translational termination"/>
    <property type="evidence" value="ECO:0007669"/>
    <property type="project" value="UniProtKB-UniRule"/>
</dbReference>
<dbReference type="CDD" id="cd00520">
    <property type="entry name" value="RRF"/>
    <property type="match status" value="1"/>
</dbReference>
<dbReference type="FunFam" id="1.10.132.20:FF:000001">
    <property type="entry name" value="Ribosome-recycling factor"/>
    <property type="match status" value="1"/>
</dbReference>
<dbReference type="FunFam" id="3.30.1360.40:FF:000001">
    <property type="entry name" value="Ribosome-recycling factor"/>
    <property type="match status" value="1"/>
</dbReference>
<dbReference type="Gene3D" id="3.30.1360.40">
    <property type="match status" value="1"/>
</dbReference>
<dbReference type="Gene3D" id="1.10.132.20">
    <property type="entry name" value="Ribosome-recycling factor"/>
    <property type="match status" value="1"/>
</dbReference>
<dbReference type="HAMAP" id="MF_00040">
    <property type="entry name" value="RRF"/>
    <property type="match status" value="1"/>
</dbReference>
<dbReference type="InterPro" id="IPR002661">
    <property type="entry name" value="Ribosome_recyc_fac"/>
</dbReference>
<dbReference type="InterPro" id="IPR023584">
    <property type="entry name" value="Ribosome_recyc_fac_dom"/>
</dbReference>
<dbReference type="InterPro" id="IPR036191">
    <property type="entry name" value="RRF_sf"/>
</dbReference>
<dbReference type="NCBIfam" id="TIGR00496">
    <property type="entry name" value="frr"/>
    <property type="match status" value="1"/>
</dbReference>
<dbReference type="PANTHER" id="PTHR20982:SF3">
    <property type="entry name" value="MITOCHONDRIAL RIBOSOME RECYCLING FACTOR PSEUDO 1"/>
    <property type="match status" value="1"/>
</dbReference>
<dbReference type="PANTHER" id="PTHR20982">
    <property type="entry name" value="RIBOSOME RECYCLING FACTOR"/>
    <property type="match status" value="1"/>
</dbReference>
<dbReference type="Pfam" id="PF01765">
    <property type="entry name" value="RRF"/>
    <property type="match status" value="1"/>
</dbReference>
<dbReference type="SUPFAM" id="SSF55194">
    <property type="entry name" value="Ribosome recycling factor, RRF"/>
    <property type="match status" value="1"/>
</dbReference>
<name>RRF_LEPBL</name>
<feature type="chain" id="PRO_1000003191" description="Ribosome-recycling factor">
    <location>
        <begin position="1"/>
        <end position="184"/>
    </location>
</feature>
<proteinExistence type="inferred from homology"/>
<gene>
    <name evidence="1" type="primary">frr</name>
    <name type="ordered locus">LBL_0922</name>
</gene>
<comment type="function">
    <text evidence="1">Responsible for the release of ribosomes from messenger RNA at the termination of protein biosynthesis. May increase the efficiency of translation by recycling ribosomes from one round of translation to another.</text>
</comment>
<comment type="subcellular location">
    <subcellularLocation>
        <location evidence="1">Cytoplasm</location>
    </subcellularLocation>
</comment>
<comment type="similarity">
    <text evidence="1">Belongs to the RRF family.</text>
</comment>
<evidence type="ECO:0000255" key="1">
    <source>
        <dbReference type="HAMAP-Rule" id="MF_00040"/>
    </source>
</evidence>
<organism>
    <name type="scientific">Leptospira borgpetersenii serovar Hardjo-bovis (strain L550)</name>
    <dbReference type="NCBI Taxonomy" id="355276"/>
    <lineage>
        <taxon>Bacteria</taxon>
        <taxon>Pseudomonadati</taxon>
        <taxon>Spirochaetota</taxon>
        <taxon>Spirochaetia</taxon>
        <taxon>Leptospirales</taxon>
        <taxon>Leptospiraceae</taxon>
        <taxon>Leptospira</taxon>
    </lineage>
</organism>
<sequence>MASEEIISGMKTKMDKTIDLVKKDFGTVRTGRANPSLVEDIRVDYYGTLTPINQLGNISVPEPRMLVISPYDKGIMKDIEKAIQASGLGLQPSNDGVVIRIIIPELTGERRKELAKIVKSKSEEKKVAIRNIRRDAMEDLKKHTEGLSQDEIKTIQDRIQKTTDSYIDKISALTAEKEKEITTI</sequence>
<accession>Q053N2</accession>
<protein>
    <recommendedName>
        <fullName evidence="1">Ribosome-recycling factor</fullName>
        <shortName evidence="1">RRF</shortName>
    </recommendedName>
    <alternativeName>
        <fullName evidence="1">Ribosome-releasing factor</fullName>
    </alternativeName>
</protein>
<keyword id="KW-0963">Cytoplasm</keyword>
<keyword id="KW-0648">Protein biosynthesis</keyword>
<reference key="1">
    <citation type="journal article" date="2006" name="Proc. Natl. Acad. Sci. U.S.A.">
        <title>Genome reduction in Leptospira borgpetersenii reflects limited transmission potential.</title>
        <authorList>
            <person name="Bulach D.M."/>
            <person name="Zuerner R.L."/>
            <person name="Wilson P."/>
            <person name="Seemann T."/>
            <person name="McGrath A."/>
            <person name="Cullen P.A."/>
            <person name="Davis J."/>
            <person name="Johnson M."/>
            <person name="Kuczek E."/>
            <person name="Alt D.P."/>
            <person name="Peterson-Burch B."/>
            <person name="Coppel R.L."/>
            <person name="Rood J.I."/>
            <person name="Davies J.K."/>
            <person name="Adler B."/>
        </authorList>
    </citation>
    <scope>NUCLEOTIDE SEQUENCE [LARGE SCALE GENOMIC DNA]</scope>
    <source>
        <strain>L550</strain>
    </source>
</reference>